<comment type="function">
    <text evidence="3 5 6 7">V region of the variable domain of T cell receptor (TR) beta chain that participates in the antigen recognition (PubMed:24600447). Alpha-beta T cell receptors are antigen specific receptors which are essential to the immune response and are present on the cell surface of T lymphocytes. Recognize peptide-major histocompatibility (MH) (pMH) complexes that are displayed by antigen presenting cells (APC), a prerequisite for efficient T cell adaptive immunity against pathogens (PubMed:25493333). Binding of alpha-beta TR to pMH complex initiates TR-CD3 clustering on the cell surface and intracellular activation of LCK that phosphorylates the ITAM motifs of CD3G, CD3D, CD3E and CD247 enabling the recruitment of ZAP70. In turn ZAP70 phosphorylates LAT, which recruits numerous signaling molecules to form the LAT signalosome. The LAT signalosome propagates signal branching to three major signaling pathways, the calcium, the mitogen-activated protein kinase (MAPK) kinase and the nuclear factor NF-kappa-B (NF-kB) pathways, leading to the mobilization of transcription factors that are critical for gene expression and essential for T cell growth and differentiation (PubMed:23524462). The T cell repertoire is generated in the thymus, by V-(D)-J rearrangement. This repertoire is then shaped by intrathymic selection events to generate a peripheral T cell pool of self-MH restricted, non-autoaggressive T cells. Post-thymic interaction of alpha-beta TR with the pMH complexes shapes TR structural and functional avidity (PubMed:15040585).</text>
</comment>
<comment type="subunit">
    <text evidence="4">Alpha-beta TR is a heterodimer composed of an alpha and beta chain; disulfide-linked. The alpha-beta TR is associated with the transmembrane signaling CD3 coreceptor proteins to form the TR-CD3 (TcR or TCR). The assembly of alpha-beta TR heterodimers with CD3 occurs in the endoplasmic reticulum where a single alpha-beta TR heterodimer associates with one CD3D-CD3E heterodimer, one CD3G-CD3E heterodimer and one CD247 homodimer forming a stable octameric structure. CD3D-CD3E and CD3G-CD3E heterodimers preferentially associate with TR alpha and TR beta chains, respectively. The association of the CD247 homodimer is the last step of TcR assembly in the endoplasmic reticulum and is required for transport to the cell surface.</text>
</comment>
<comment type="subcellular location">
    <subcellularLocation>
        <location evidence="4">Cell membrane</location>
    </subcellularLocation>
</comment>
<comment type="polymorphism">
    <text evidence="9">There are several alleles. The sequence shown is that of IMGT allele TRBV6-2*01.</text>
</comment>
<dbReference type="EMBL" id="AC245088">
    <property type="status" value="NOT_ANNOTATED_CDS"/>
    <property type="molecule type" value="Genomic_DNA"/>
</dbReference>
<dbReference type="SMR" id="A0A0J9YXY3"/>
<dbReference type="FunCoup" id="A0A0J9YXY3">
    <property type="interactions" value="382"/>
</dbReference>
<dbReference type="IMGT_GENE-DB" id="TRBV6-2"/>
<dbReference type="GlyCosmos" id="A0A0J9YXY3">
    <property type="glycosylation" value="1 site, No reported glycans"/>
</dbReference>
<dbReference type="GlyGen" id="A0A0J9YXY3">
    <property type="glycosylation" value="1 site"/>
</dbReference>
<dbReference type="BioMuta" id="ENSG00000282353"/>
<dbReference type="MassIVE" id="A0A0J9YXY3"/>
<dbReference type="Ensembl" id="ENST00000632016.1">
    <property type="protein sequence ID" value="ENSP00000488603.1"/>
    <property type="gene ID" value="ENSG00000282719.1"/>
</dbReference>
<dbReference type="Ensembl" id="ENST00000634383.1">
    <property type="protein sequence ID" value="ENSP00000488969.1"/>
    <property type="gene ID" value="ENSG00000283063.1"/>
</dbReference>
<dbReference type="AGR" id="HGNC:12227"/>
<dbReference type="GeneCards" id="TRBV6-2"/>
<dbReference type="HGNC" id="HGNC:12227">
    <property type="gene designation" value="TRBV6-2"/>
</dbReference>
<dbReference type="HPA" id="ENSG00000283063">
    <property type="expression patterns" value="Tissue enriched (lymphoid)"/>
</dbReference>
<dbReference type="neXtProt" id="NX_A0A0J9YXY3"/>
<dbReference type="VEuPathDB" id="HostDB:ENSG00000283063"/>
<dbReference type="InParanoid" id="A0A0J9YXY3"/>
<dbReference type="OMA" id="GHDYMYW"/>
<dbReference type="OrthoDB" id="9049585at2759"/>
<dbReference type="PAN-GO" id="A0A0J9YXY3">
    <property type="GO annotations" value="2 GO annotations based on evolutionary models"/>
</dbReference>
<dbReference type="ChiTaRS" id="TRBV6-2">
    <property type="organism name" value="human"/>
</dbReference>
<dbReference type="Pharos" id="A0A0J9YXY3">
    <property type="development level" value="Tdark"/>
</dbReference>
<dbReference type="PRO" id="PR:A0A0J9YXY3"/>
<dbReference type="Proteomes" id="UP000005640">
    <property type="component" value="Chromosome 7"/>
</dbReference>
<dbReference type="RNAct" id="A0A0J9YXY3">
    <property type="molecule type" value="protein"/>
</dbReference>
<dbReference type="Bgee" id="ENSG00000283063">
    <property type="expression patterns" value="Expressed in lymph node and 77 other cell types or tissues"/>
</dbReference>
<dbReference type="ExpressionAtlas" id="A0A0J9YXY3">
    <property type="expression patterns" value="baseline and differential"/>
</dbReference>
<dbReference type="GO" id="GO:0005886">
    <property type="term" value="C:plasma membrane"/>
    <property type="evidence" value="ECO:0000318"/>
    <property type="project" value="GO_Central"/>
</dbReference>
<dbReference type="GO" id="GO:0042101">
    <property type="term" value="C:T cell receptor complex"/>
    <property type="evidence" value="ECO:0007669"/>
    <property type="project" value="UniProtKB-KW"/>
</dbReference>
<dbReference type="GO" id="GO:0002250">
    <property type="term" value="P:adaptive immune response"/>
    <property type="evidence" value="ECO:0007669"/>
    <property type="project" value="UniProtKB-KW"/>
</dbReference>
<dbReference type="GO" id="GO:0007166">
    <property type="term" value="P:cell surface receptor signaling pathway"/>
    <property type="evidence" value="ECO:0000318"/>
    <property type="project" value="GO_Central"/>
</dbReference>
<dbReference type="Gene3D" id="2.60.40.10">
    <property type="entry name" value="Immunoglobulins"/>
    <property type="match status" value="1"/>
</dbReference>
<dbReference type="InterPro" id="IPR007110">
    <property type="entry name" value="Ig-like_dom"/>
</dbReference>
<dbReference type="InterPro" id="IPR036179">
    <property type="entry name" value="Ig-like_dom_sf"/>
</dbReference>
<dbReference type="InterPro" id="IPR013783">
    <property type="entry name" value="Ig-like_fold"/>
</dbReference>
<dbReference type="InterPro" id="IPR013106">
    <property type="entry name" value="Ig_V-set"/>
</dbReference>
<dbReference type="InterPro" id="IPR050413">
    <property type="entry name" value="TCR_beta_variable"/>
</dbReference>
<dbReference type="PANTHER" id="PTHR23268:SF19">
    <property type="entry name" value="T CELL RECEPTOR BETA VARIABLE 6-2-RELATED"/>
    <property type="match status" value="1"/>
</dbReference>
<dbReference type="PANTHER" id="PTHR23268">
    <property type="entry name" value="T-CELL RECEPTOR BETA CHAIN"/>
    <property type="match status" value="1"/>
</dbReference>
<dbReference type="Pfam" id="PF07686">
    <property type="entry name" value="V-set"/>
    <property type="match status" value="1"/>
</dbReference>
<dbReference type="SUPFAM" id="SSF48726">
    <property type="entry name" value="Immunoglobulin"/>
    <property type="match status" value="1"/>
</dbReference>
<dbReference type="PROSITE" id="PS50835">
    <property type="entry name" value="IG_LIKE"/>
    <property type="match status" value="1"/>
</dbReference>
<reference key="1">
    <citation type="journal article" date="2003" name="Nature">
        <title>The DNA sequence of human chromosome 7.</title>
        <authorList>
            <person name="Hillier L.W."/>
            <person name="Fulton R.S."/>
            <person name="Fulton L.A."/>
            <person name="Graves T.A."/>
            <person name="Pepin K.H."/>
            <person name="Wagner-McPherson C."/>
            <person name="Layman D."/>
            <person name="Maas J."/>
            <person name="Jaeger S."/>
            <person name="Walker R."/>
            <person name="Wylie K."/>
            <person name="Sekhon M."/>
            <person name="Becker M.C."/>
            <person name="O'Laughlin M.D."/>
            <person name="Schaller M.E."/>
            <person name="Fewell G.A."/>
            <person name="Delehaunty K.D."/>
            <person name="Miner T.L."/>
            <person name="Nash W.E."/>
            <person name="Cordes M."/>
            <person name="Du H."/>
            <person name="Sun H."/>
            <person name="Edwards J."/>
            <person name="Bradshaw-Cordum H."/>
            <person name="Ali J."/>
            <person name="Andrews S."/>
            <person name="Isak A."/>
            <person name="Vanbrunt A."/>
            <person name="Nguyen C."/>
            <person name="Du F."/>
            <person name="Lamar B."/>
            <person name="Courtney L."/>
            <person name="Kalicki J."/>
            <person name="Ozersky P."/>
            <person name="Bielicki L."/>
            <person name="Scott K."/>
            <person name="Holmes A."/>
            <person name="Harkins R."/>
            <person name="Harris A."/>
            <person name="Strong C.M."/>
            <person name="Hou S."/>
            <person name="Tomlinson C."/>
            <person name="Dauphin-Kohlberg S."/>
            <person name="Kozlowicz-Reilly A."/>
            <person name="Leonard S."/>
            <person name="Rohlfing T."/>
            <person name="Rock S.M."/>
            <person name="Tin-Wollam A.-M."/>
            <person name="Abbott A."/>
            <person name="Minx P."/>
            <person name="Maupin R."/>
            <person name="Strowmatt C."/>
            <person name="Latreille P."/>
            <person name="Miller N."/>
            <person name="Johnson D."/>
            <person name="Murray J."/>
            <person name="Woessner J.P."/>
            <person name="Wendl M.C."/>
            <person name="Yang S.-P."/>
            <person name="Schultz B.R."/>
            <person name="Wallis J.W."/>
            <person name="Spieth J."/>
            <person name="Bieri T.A."/>
            <person name="Nelson J.O."/>
            <person name="Berkowicz N."/>
            <person name="Wohldmann P.E."/>
            <person name="Cook L.L."/>
            <person name="Hickenbotham M.T."/>
            <person name="Eldred J."/>
            <person name="Williams D."/>
            <person name="Bedell J.A."/>
            <person name="Mardis E.R."/>
            <person name="Clifton S.W."/>
            <person name="Chissoe S.L."/>
            <person name="Marra M.A."/>
            <person name="Raymond C."/>
            <person name="Haugen E."/>
            <person name="Gillett W."/>
            <person name="Zhou Y."/>
            <person name="James R."/>
            <person name="Phelps K."/>
            <person name="Iadanoto S."/>
            <person name="Bubb K."/>
            <person name="Simms E."/>
            <person name="Levy R."/>
            <person name="Clendenning J."/>
            <person name="Kaul R."/>
            <person name="Kent W.J."/>
            <person name="Furey T.S."/>
            <person name="Baertsch R.A."/>
            <person name="Brent M.R."/>
            <person name="Keibler E."/>
            <person name="Flicek P."/>
            <person name="Bork P."/>
            <person name="Suyama M."/>
            <person name="Bailey J.A."/>
            <person name="Portnoy M.E."/>
            <person name="Torrents D."/>
            <person name="Chinwalla A.T."/>
            <person name="Gish W.R."/>
            <person name="Eddy S.R."/>
            <person name="McPherson J.D."/>
            <person name="Olson M.V."/>
            <person name="Eichler E.E."/>
            <person name="Green E.D."/>
            <person name="Waterston R.H."/>
            <person name="Wilson R.K."/>
        </authorList>
    </citation>
    <scope>NUCLEOTIDE SEQUENCE [LARGE SCALE GENOMIC DNA] (IMGT ALLELE TRBV6-2*01)</scope>
</reference>
<reference key="2">
    <citation type="book" date="2001" name="The T Cell Receptor FactsBook.">
        <title>The T Cell Receptor FactsBook.</title>
        <editorList>
            <person name="Lefranc M.P."/>
            <person name="Lefranc G."/>
        </editorList>
        <authorList>
            <person name="Lefranc M.P."/>
            <person name="Lefranc G."/>
        </authorList>
    </citation>
    <scope>NOMENCLATURE</scope>
</reference>
<reference key="3">
    <citation type="journal article" date="2004" name="Nat. Rev. Immunol.">
        <title>The many important facets of T-cell repertoire diversity.</title>
        <authorList>
            <person name="Nikolich-Zugich J."/>
            <person name="Slifka M.K."/>
            <person name="Messaoudi I."/>
        </authorList>
    </citation>
    <scope>REVIEW ON T CELL REPERTOIRE DIVERSITY</scope>
</reference>
<reference key="4">
    <citation type="journal article" date="2010" name="Cold Spring Harb. Perspect. Biol.">
        <title>Structural biology of the T-cell receptor: insights into receptor assembly, ligand recognition, and initiation of signaling.</title>
        <authorList>
            <person name="Wucherpfennig K.W."/>
            <person name="Gagnon E."/>
            <person name="Call M.J."/>
            <person name="Huseby E.S."/>
            <person name="Call M.E."/>
        </authorList>
    </citation>
    <scope>REVIEW ON T CELL RECEPTOR-CD3 COMPLEX ASSEMBLY</scope>
    <scope>SUBCELLULAR LOCATION</scope>
</reference>
<reference key="5">
    <citation type="journal article" date="2013" name="Nat. Rev. Immunol.">
        <title>T cell receptor signalling networks: branched, diversified and bounded.</title>
        <authorList>
            <person name="Brownlie R.J."/>
            <person name="Zamoyska R."/>
        </authorList>
    </citation>
    <scope>REVIEW ON T CELL RECEPTOR SIGNALING</scope>
</reference>
<reference key="6">
    <citation type="journal article" date="2014" name="Front. Immunol.">
        <title>Immunoglobulin and T Cell Receptor Genes: IMGT((R)) and the Birth and Rise of Immunoinformatics.</title>
        <authorList>
            <person name="Lefranc M.P."/>
        </authorList>
    </citation>
    <scope>NOMENCLATURE</scope>
</reference>
<reference key="7">
    <citation type="journal article" date="2015" name="Annu. Rev. Immunol.">
        <title>T cell antigen receptor recognition of antigen-presenting molecules.</title>
        <authorList>
            <person name="Rossjohn J."/>
            <person name="Gras S."/>
            <person name="Miles J.J."/>
            <person name="Turner S.J."/>
            <person name="Godfrey D.I."/>
            <person name="McCluskey J."/>
        </authorList>
    </citation>
    <scope>REVIEW ON FUNCTION</scope>
</reference>
<sequence>MSLGLLCCGAFSLLWAGPVNAGVTQTPKFRVLKTGQSMTLLCAQDMNHEYMYWYRQDPGMGLRLIHYSVGEGTTAKGEVPDGYNVSRLKKQNFLLGLESAAPSQTSVYFCASSY</sequence>
<feature type="signal peptide" evidence="1">
    <location>
        <begin position="1"/>
        <end position="21"/>
    </location>
</feature>
<feature type="chain" id="PRO_5013455665" description="T cell receptor beta variable 6-2" evidence="1">
    <location>
        <begin position="22"/>
        <end position="114"/>
    </location>
</feature>
<feature type="domain" description="Ig-like" evidence="2">
    <location>
        <begin position="22"/>
        <end position="114" status="greater than"/>
    </location>
</feature>
<feature type="glycosylation site" description="N-linked (GlcNAc...) asparagine" evidence="1">
    <location>
        <position position="84"/>
    </location>
</feature>
<feature type="disulfide bond" evidence="2">
    <location>
        <begin position="42"/>
        <end position="110"/>
    </location>
</feature>
<feature type="non-terminal residue">
    <location>
        <position position="114"/>
    </location>
</feature>
<proteinExistence type="inferred from homology"/>
<organism>
    <name type="scientific">Homo sapiens</name>
    <name type="common">Human</name>
    <dbReference type="NCBI Taxonomy" id="9606"/>
    <lineage>
        <taxon>Eukaryota</taxon>
        <taxon>Metazoa</taxon>
        <taxon>Chordata</taxon>
        <taxon>Craniata</taxon>
        <taxon>Vertebrata</taxon>
        <taxon>Euteleostomi</taxon>
        <taxon>Mammalia</taxon>
        <taxon>Eutheria</taxon>
        <taxon>Euarchontoglires</taxon>
        <taxon>Primates</taxon>
        <taxon>Haplorrhini</taxon>
        <taxon>Catarrhini</taxon>
        <taxon>Hominidae</taxon>
        <taxon>Homo</taxon>
    </lineage>
</organism>
<name>TVB62_HUMAN</name>
<protein>
    <recommendedName>
        <fullName evidence="8">T cell receptor beta variable 6-2</fullName>
    </recommendedName>
</protein>
<evidence type="ECO:0000255" key="1"/>
<evidence type="ECO:0000255" key="2">
    <source>
        <dbReference type="PROSITE-ProRule" id="PRU00114"/>
    </source>
</evidence>
<evidence type="ECO:0000303" key="3">
    <source>
    </source>
</evidence>
<evidence type="ECO:0000303" key="4">
    <source>
    </source>
</evidence>
<evidence type="ECO:0000303" key="5">
    <source>
    </source>
</evidence>
<evidence type="ECO:0000303" key="6">
    <source>
    </source>
</evidence>
<evidence type="ECO:0000303" key="7">
    <source>
    </source>
</evidence>
<evidence type="ECO:0000303" key="8">
    <source ref="2"/>
</evidence>
<evidence type="ECO:0000305" key="9"/>
<gene>
    <name evidence="8" type="primary">TRBV6-2</name>
</gene>
<keyword id="KW-1064">Adaptive immunity</keyword>
<keyword id="KW-1003">Cell membrane</keyword>
<keyword id="KW-1015">Disulfide bond</keyword>
<keyword id="KW-0325">Glycoprotein</keyword>
<keyword id="KW-0391">Immunity</keyword>
<keyword id="KW-0393">Immunoglobulin domain</keyword>
<keyword id="KW-0472">Membrane</keyword>
<keyword id="KW-0675">Receptor</keyword>
<keyword id="KW-1185">Reference proteome</keyword>
<keyword id="KW-0732">Signal</keyword>
<keyword id="KW-1279">T cell receptor</keyword>
<accession>A0A0J9YXY3</accession>
<accession>A0A588</accession>